<feature type="chain" id="PRO_1000133920" description="Bifunctional glutamine synthetase adenylyltransferase/adenylyl-removing enzyme">
    <location>
        <begin position="1"/>
        <end position="956"/>
    </location>
</feature>
<feature type="region of interest" description="Adenylyl removase" evidence="1">
    <location>
        <begin position="1"/>
        <end position="450"/>
    </location>
</feature>
<feature type="region of interest" description="Adenylyl transferase" evidence="1">
    <location>
        <begin position="456"/>
        <end position="956"/>
    </location>
</feature>
<accession>A3QAK2</accession>
<proteinExistence type="inferred from homology"/>
<gene>
    <name evidence="1" type="primary">glnE</name>
    <name type="ordered locus">Shew_0628</name>
</gene>
<keyword id="KW-0067">ATP-binding</keyword>
<keyword id="KW-0460">Magnesium</keyword>
<keyword id="KW-0511">Multifunctional enzyme</keyword>
<keyword id="KW-0547">Nucleotide-binding</keyword>
<keyword id="KW-0548">Nucleotidyltransferase</keyword>
<keyword id="KW-1185">Reference proteome</keyword>
<keyword id="KW-0808">Transferase</keyword>
<evidence type="ECO:0000255" key="1">
    <source>
        <dbReference type="HAMAP-Rule" id="MF_00802"/>
    </source>
</evidence>
<organism>
    <name type="scientific">Shewanella loihica (strain ATCC BAA-1088 / PV-4)</name>
    <dbReference type="NCBI Taxonomy" id="323850"/>
    <lineage>
        <taxon>Bacteria</taxon>
        <taxon>Pseudomonadati</taxon>
        <taxon>Pseudomonadota</taxon>
        <taxon>Gammaproteobacteria</taxon>
        <taxon>Alteromonadales</taxon>
        <taxon>Shewanellaceae</taxon>
        <taxon>Shewanella</taxon>
    </lineage>
</organism>
<sequence>MENMSEQALPHEVNQVAEQHWQRLAEAWPDISEQLTPEQTKELKTIFGLSDFVAEQLCRHPNWIVSLFEGQLSMLARDSFSSELHSILAGANDEEQVKAILRRYRNRQMVRLAWRDFLGYAELNDSLLDLSALAEALIIAARDWLYGQMCQQYGTPCDSEGNPQPLMILGMGKLGGRELNFSSDIDLIFTFPEHGETQGGRRSQDNQQFFIRMGQRLVNLLNQVTVDGFVYRVDMRLRPYGESGPLVVSFSGLEDYYQEQGRDWERYAMVKARALGPWSAYSDELHDMLRPFVYRRYIDFSAIESLRKMKQLITQEVRRRRLTDNIKLGAGGIREVEFVVQSFQLIRGGREPALRQQSLFGAIDTLYKLGQLEYLAVDELKQSYLMLRRVENLLQAIGDQQTQTLPQHLLDWQRLCFALGMAGEAELRTHIESAMAKIHRYFKETVGGQESDEVAEQWTAQLWSLVDDEDAEALLKEHGVEESELWPALKSWRGTVAKRTIGPRGRETLDKLMPWLLQEFIQLPTPTKAFLPVSKVLDQILTRTTYLELLFENPGARQQLVSLCMASPWIGEQLAKFPMLLDELIDPAQLYDTTSLDDYPSELRQYLLRVPEEDMEQQMEALRQFKLSQQLKIAAADVTGVLPVMQVSDHLTFLAEAIIEQVVLQAWQQVSKRHGTPSYLAPEEMGFAVIGYGKAGGLELGYGSDLDLVFLHNYTRDKYPDAQQTNGDRPIDIGHFYLKLAQRILHLFSTRTTSGELYEVDMRLRPSGASGLLVSEIEYFGSYQREEAWTWEHQALVRARFLFGDNRLAARFSELRADVLAMERDKAELAKEVREMRQKMRTHLLKVDEGCFDLKQSPGGIADIEFIAQYLVLANTHDHPELAIWSDNVRIFEVLSELELLPHLSAQHLTQAYCYLRDESHRLTLQQAPGQLPQESVDLHVQRVLAIYEQVLNNGQ</sequence>
<reference key="1">
    <citation type="submission" date="2007-03" db="EMBL/GenBank/DDBJ databases">
        <title>Complete sequence of Shewanella loihica PV-4.</title>
        <authorList>
            <consortium name="US DOE Joint Genome Institute"/>
            <person name="Copeland A."/>
            <person name="Lucas S."/>
            <person name="Lapidus A."/>
            <person name="Barry K."/>
            <person name="Detter J.C."/>
            <person name="Glavina del Rio T."/>
            <person name="Hammon N."/>
            <person name="Israni S."/>
            <person name="Dalin E."/>
            <person name="Tice H."/>
            <person name="Pitluck S."/>
            <person name="Chain P."/>
            <person name="Malfatti S."/>
            <person name="Shin M."/>
            <person name="Vergez L."/>
            <person name="Schmutz J."/>
            <person name="Larimer F."/>
            <person name="Land M."/>
            <person name="Hauser L."/>
            <person name="Kyrpides N."/>
            <person name="Mikhailova N."/>
            <person name="Romine M.F."/>
            <person name="Serres G."/>
            <person name="Fredrickson J."/>
            <person name="Tiedje J."/>
            <person name="Richardson P."/>
        </authorList>
    </citation>
    <scope>NUCLEOTIDE SEQUENCE [LARGE SCALE GENOMIC DNA]</scope>
    <source>
        <strain>ATCC BAA-1088 / PV-4</strain>
    </source>
</reference>
<comment type="function">
    <text evidence="1">Involved in the regulation of glutamine synthetase GlnA, a key enzyme in the process to assimilate ammonia. When cellular nitrogen levels are high, the C-terminal adenylyl transferase (AT) inactivates GlnA by covalent transfer of an adenylyl group from ATP to specific tyrosine residue of GlnA, thus reducing its activity. Conversely, when nitrogen levels are low, the N-terminal adenylyl removase (AR) activates GlnA by removing the adenylyl group by phosphorolysis, increasing its activity. The regulatory region of GlnE binds the signal transduction protein PII (GlnB) which indicates the nitrogen status of the cell.</text>
</comment>
<comment type="catalytic activity">
    <reaction evidence="1">
        <text>[glutamine synthetase]-O(4)-(5'-adenylyl)-L-tyrosine + phosphate = [glutamine synthetase]-L-tyrosine + ADP</text>
        <dbReference type="Rhea" id="RHEA:43716"/>
        <dbReference type="Rhea" id="RHEA-COMP:10660"/>
        <dbReference type="Rhea" id="RHEA-COMP:10661"/>
        <dbReference type="ChEBI" id="CHEBI:43474"/>
        <dbReference type="ChEBI" id="CHEBI:46858"/>
        <dbReference type="ChEBI" id="CHEBI:83624"/>
        <dbReference type="ChEBI" id="CHEBI:456216"/>
        <dbReference type="EC" id="2.7.7.89"/>
    </reaction>
</comment>
<comment type="catalytic activity">
    <reaction evidence="1">
        <text>[glutamine synthetase]-L-tyrosine + ATP = [glutamine synthetase]-O(4)-(5'-adenylyl)-L-tyrosine + diphosphate</text>
        <dbReference type="Rhea" id="RHEA:18589"/>
        <dbReference type="Rhea" id="RHEA-COMP:10660"/>
        <dbReference type="Rhea" id="RHEA-COMP:10661"/>
        <dbReference type="ChEBI" id="CHEBI:30616"/>
        <dbReference type="ChEBI" id="CHEBI:33019"/>
        <dbReference type="ChEBI" id="CHEBI:46858"/>
        <dbReference type="ChEBI" id="CHEBI:83624"/>
        <dbReference type="EC" id="2.7.7.42"/>
    </reaction>
</comment>
<comment type="cofactor">
    <cofactor evidence="1">
        <name>Mg(2+)</name>
        <dbReference type="ChEBI" id="CHEBI:18420"/>
    </cofactor>
</comment>
<comment type="similarity">
    <text evidence="1">Belongs to the GlnE family.</text>
</comment>
<protein>
    <recommendedName>
        <fullName evidence="1">Bifunctional glutamine synthetase adenylyltransferase/adenylyl-removing enzyme</fullName>
    </recommendedName>
    <alternativeName>
        <fullName evidence="1">ATP:glutamine synthetase adenylyltransferase</fullName>
    </alternativeName>
    <alternativeName>
        <fullName evidence="1">ATase</fullName>
    </alternativeName>
    <domain>
        <recommendedName>
            <fullName evidence="1">Glutamine synthetase adenylyl-L-tyrosine phosphorylase</fullName>
            <ecNumber evidence="1">2.7.7.89</ecNumber>
        </recommendedName>
        <alternativeName>
            <fullName evidence="1">Adenylyl removase</fullName>
            <shortName evidence="1">AR</shortName>
            <shortName evidence="1">AT-N</shortName>
        </alternativeName>
    </domain>
    <domain>
        <recommendedName>
            <fullName evidence="1">Glutamine synthetase adenylyl transferase</fullName>
            <ecNumber evidence="1">2.7.7.42</ecNumber>
        </recommendedName>
        <alternativeName>
            <fullName evidence="1">Adenylyl transferase</fullName>
            <shortName evidence="1">AT</shortName>
            <shortName evidence="1">AT-C</shortName>
        </alternativeName>
    </domain>
</protein>
<dbReference type="EC" id="2.7.7.89" evidence="1"/>
<dbReference type="EC" id="2.7.7.42" evidence="1"/>
<dbReference type="EMBL" id="CP000606">
    <property type="protein sequence ID" value="ABO22500.1"/>
    <property type="molecule type" value="Genomic_DNA"/>
</dbReference>
<dbReference type="RefSeq" id="WP_011864434.1">
    <property type="nucleotide sequence ID" value="NC_009092.1"/>
</dbReference>
<dbReference type="SMR" id="A3QAK2"/>
<dbReference type="STRING" id="323850.Shew_0628"/>
<dbReference type="KEGG" id="slo:Shew_0628"/>
<dbReference type="eggNOG" id="COG1391">
    <property type="taxonomic scope" value="Bacteria"/>
</dbReference>
<dbReference type="HOGENOM" id="CLU_006233_0_1_6"/>
<dbReference type="Proteomes" id="UP000001558">
    <property type="component" value="Chromosome"/>
</dbReference>
<dbReference type="GO" id="GO:0005829">
    <property type="term" value="C:cytosol"/>
    <property type="evidence" value="ECO:0007669"/>
    <property type="project" value="TreeGrafter"/>
</dbReference>
<dbReference type="GO" id="GO:0008882">
    <property type="term" value="F:[glutamate-ammonia-ligase] adenylyltransferase activity"/>
    <property type="evidence" value="ECO:0007669"/>
    <property type="project" value="UniProtKB-UniRule"/>
</dbReference>
<dbReference type="GO" id="GO:0047388">
    <property type="term" value="F:[glutamine synthetase]-adenylyl-L-tyrosine phosphorylase activity"/>
    <property type="evidence" value="ECO:0007669"/>
    <property type="project" value="UniProtKB-EC"/>
</dbReference>
<dbReference type="GO" id="GO:0005524">
    <property type="term" value="F:ATP binding"/>
    <property type="evidence" value="ECO:0007669"/>
    <property type="project" value="UniProtKB-UniRule"/>
</dbReference>
<dbReference type="GO" id="GO:0000287">
    <property type="term" value="F:magnesium ion binding"/>
    <property type="evidence" value="ECO:0007669"/>
    <property type="project" value="UniProtKB-UniRule"/>
</dbReference>
<dbReference type="GO" id="GO:0000820">
    <property type="term" value="P:regulation of glutamine family amino acid metabolic process"/>
    <property type="evidence" value="ECO:0007669"/>
    <property type="project" value="UniProtKB-UniRule"/>
</dbReference>
<dbReference type="CDD" id="cd05401">
    <property type="entry name" value="NT_GlnE_GlnD_like"/>
    <property type="match status" value="2"/>
</dbReference>
<dbReference type="FunFam" id="1.20.120.1510:FF:000001">
    <property type="entry name" value="Bifunctional glutamine synthetase adenylyltransferase/adenylyl-removing enzyme"/>
    <property type="match status" value="1"/>
</dbReference>
<dbReference type="FunFam" id="1.20.120.330:FF:000005">
    <property type="entry name" value="Bifunctional glutamine synthetase adenylyltransferase/adenylyl-removing enzyme"/>
    <property type="match status" value="1"/>
</dbReference>
<dbReference type="FunFam" id="3.30.460.10:FF:000009">
    <property type="entry name" value="Bifunctional glutamine synthetase adenylyltransferase/adenylyl-removing enzyme"/>
    <property type="match status" value="1"/>
</dbReference>
<dbReference type="FunFam" id="3.30.460.10:FF:000014">
    <property type="entry name" value="Bifunctional glutamine synthetase adenylyltransferase/adenylyl-removing enzyme"/>
    <property type="match status" value="1"/>
</dbReference>
<dbReference type="Gene3D" id="1.20.120.1510">
    <property type="match status" value="1"/>
</dbReference>
<dbReference type="Gene3D" id="3.30.460.10">
    <property type="entry name" value="Beta Polymerase, domain 2"/>
    <property type="match status" value="2"/>
</dbReference>
<dbReference type="Gene3D" id="1.10.4050.10">
    <property type="entry name" value="Glutamine synthase adenylyltransferase GlnE"/>
    <property type="match status" value="1"/>
</dbReference>
<dbReference type="Gene3D" id="1.20.120.330">
    <property type="entry name" value="Nucleotidyltransferases domain 2"/>
    <property type="match status" value="2"/>
</dbReference>
<dbReference type="HAMAP" id="MF_00802">
    <property type="entry name" value="GlnE"/>
    <property type="match status" value="1"/>
</dbReference>
<dbReference type="InterPro" id="IPR023057">
    <property type="entry name" value="GlnE"/>
</dbReference>
<dbReference type="InterPro" id="IPR005190">
    <property type="entry name" value="GlnE_rpt_dom"/>
</dbReference>
<dbReference type="InterPro" id="IPR043519">
    <property type="entry name" value="NT_sf"/>
</dbReference>
<dbReference type="InterPro" id="IPR013546">
    <property type="entry name" value="PII_UdlTrfase/GS_AdlTrfase"/>
</dbReference>
<dbReference type="NCBIfam" id="NF008292">
    <property type="entry name" value="PRK11072.1"/>
    <property type="match status" value="1"/>
</dbReference>
<dbReference type="PANTHER" id="PTHR30621:SF0">
    <property type="entry name" value="BIFUNCTIONAL GLUTAMINE SYNTHETASE ADENYLYLTRANSFERASE_ADENYLYL-REMOVING ENZYME"/>
    <property type="match status" value="1"/>
</dbReference>
<dbReference type="PANTHER" id="PTHR30621">
    <property type="entry name" value="GLUTAMINE SYNTHETASE ADENYLYLTRANSFERASE"/>
    <property type="match status" value="1"/>
</dbReference>
<dbReference type="Pfam" id="PF08335">
    <property type="entry name" value="GlnD_UR_UTase"/>
    <property type="match status" value="2"/>
</dbReference>
<dbReference type="Pfam" id="PF03710">
    <property type="entry name" value="GlnE"/>
    <property type="match status" value="2"/>
</dbReference>
<dbReference type="SUPFAM" id="SSF81301">
    <property type="entry name" value="Nucleotidyltransferase"/>
    <property type="match status" value="2"/>
</dbReference>
<dbReference type="SUPFAM" id="SSF81593">
    <property type="entry name" value="Nucleotidyltransferase substrate binding subunit/domain"/>
    <property type="match status" value="2"/>
</dbReference>
<name>GLNE_SHELP</name>